<dbReference type="EMBL" id="AL123456">
    <property type="protein sequence ID" value="CCP42830.1"/>
    <property type="molecule type" value="Genomic_DNA"/>
</dbReference>
<dbReference type="PIR" id="A70752">
    <property type="entry name" value="A70752"/>
</dbReference>
<dbReference type="RefSeq" id="WP_003400802.1">
    <property type="nucleotide sequence ID" value="NZ_NVQJ01000053.1"/>
</dbReference>
<dbReference type="RefSeq" id="YP_177691.1">
    <property type="nucleotide sequence ID" value="NC_000962.3"/>
</dbReference>
<dbReference type="SMR" id="P9WHB1"/>
<dbReference type="FunCoup" id="P9WHB1">
    <property type="interactions" value="61"/>
</dbReference>
<dbReference type="STRING" id="83332.Rv0105c"/>
<dbReference type="PaxDb" id="83332-Rv0105c"/>
<dbReference type="DNASU" id="886920"/>
<dbReference type="GeneID" id="886920"/>
<dbReference type="KEGG" id="mtu:Rv0105c"/>
<dbReference type="KEGG" id="mtv:RVBD_0105c"/>
<dbReference type="TubercuList" id="Rv0105c"/>
<dbReference type="eggNOG" id="COG0227">
    <property type="taxonomic scope" value="Bacteria"/>
</dbReference>
<dbReference type="InParanoid" id="P9WHB1"/>
<dbReference type="OrthoDB" id="9805609at2"/>
<dbReference type="PhylomeDB" id="P9WHB1"/>
<dbReference type="PRO" id="PR:P9WHB1"/>
<dbReference type="Proteomes" id="UP000001584">
    <property type="component" value="Chromosome"/>
</dbReference>
<dbReference type="GO" id="GO:1990904">
    <property type="term" value="C:ribonucleoprotein complex"/>
    <property type="evidence" value="ECO:0007669"/>
    <property type="project" value="UniProtKB-KW"/>
</dbReference>
<dbReference type="GO" id="GO:0005840">
    <property type="term" value="C:ribosome"/>
    <property type="evidence" value="ECO:0007669"/>
    <property type="project" value="UniProtKB-KW"/>
</dbReference>
<dbReference type="GO" id="GO:0003735">
    <property type="term" value="F:structural constituent of ribosome"/>
    <property type="evidence" value="ECO:0000318"/>
    <property type="project" value="GO_Central"/>
</dbReference>
<dbReference type="GO" id="GO:0006412">
    <property type="term" value="P:translation"/>
    <property type="evidence" value="ECO:0007669"/>
    <property type="project" value="UniProtKB-UniRule"/>
</dbReference>
<dbReference type="Gene3D" id="2.30.170.40">
    <property type="entry name" value="Ribosomal protein L28/L24"/>
    <property type="match status" value="1"/>
</dbReference>
<dbReference type="HAMAP" id="MF_00373">
    <property type="entry name" value="Ribosomal_bL28"/>
    <property type="match status" value="1"/>
</dbReference>
<dbReference type="InterPro" id="IPR026569">
    <property type="entry name" value="Ribosomal_bL28"/>
</dbReference>
<dbReference type="InterPro" id="IPR034704">
    <property type="entry name" value="Ribosomal_bL28/bL31-like_sf"/>
</dbReference>
<dbReference type="InterPro" id="IPR001383">
    <property type="entry name" value="Ribosomal_bL28_bact-type"/>
</dbReference>
<dbReference type="InterPro" id="IPR037147">
    <property type="entry name" value="Ribosomal_bL28_sf"/>
</dbReference>
<dbReference type="NCBIfam" id="TIGR00009">
    <property type="entry name" value="L28"/>
    <property type="match status" value="1"/>
</dbReference>
<dbReference type="PANTHER" id="PTHR13528">
    <property type="entry name" value="39S RIBOSOMAL PROTEIN L28, MITOCHONDRIAL"/>
    <property type="match status" value="1"/>
</dbReference>
<dbReference type="PANTHER" id="PTHR13528:SF2">
    <property type="entry name" value="LARGE RIBOSOMAL SUBUNIT PROTEIN BL28M"/>
    <property type="match status" value="1"/>
</dbReference>
<dbReference type="Pfam" id="PF00830">
    <property type="entry name" value="Ribosomal_L28"/>
    <property type="match status" value="1"/>
</dbReference>
<dbReference type="SUPFAM" id="SSF143800">
    <property type="entry name" value="L28p-like"/>
    <property type="match status" value="1"/>
</dbReference>
<reference key="1">
    <citation type="journal article" date="1998" name="Nature">
        <title>Deciphering the biology of Mycobacterium tuberculosis from the complete genome sequence.</title>
        <authorList>
            <person name="Cole S.T."/>
            <person name="Brosch R."/>
            <person name="Parkhill J."/>
            <person name="Garnier T."/>
            <person name="Churcher C.M."/>
            <person name="Harris D.E."/>
            <person name="Gordon S.V."/>
            <person name="Eiglmeier K."/>
            <person name="Gas S."/>
            <person name="Barry C.E. III"/>
            <person name="Tekaia F."/>
            <person name="Badcock K."/>
            <person name="Basham D."/>
            <person name="Brown D."/>
            <person name="Chillingworth T."/>
            <person name="Connor R."/>
            <person name="Davies R.M."/>
            <person name="Devlin K."/>
            <person name="Feltwell T."/>
            <person name="Gentles S."/>
            <person name="Hamlin N."/>
            <person name="Holroyd S."/>
            <person name="Hornsby T."/>
            <person name="Jagels K."/>
            <person name="Krogh A."/>
            <person name="McLean J."/>
            <person name="Moule S."/>
            <person name="Murphy L.D."/>
            <person name="Oliver S."/>
            <person name="Osborne J."/>
            <person name="Quail M.A."/>
            <person name="Rajandream M.A."/>
            <person name="Rogers J."/>
            <person name="Rutter S."/>
            <person name="Seeger K."/>
            <person name="Skelton S."/>
            <person name="Squares S."/>
            <person name="Squares R."/>
            <person name="Sulston J.E."/>
            <person name="Taylor K."/>
            <person name="Whitehead S."/>
            <person name="Barrell B.G."/>
        </authorList>
    </citation>
    <scope>NUCLEOTIDE SEQUENCE [LARGE SCALE GENOMIC DNA]</scope>
    <source>
        <strain>ATCC 25618 / H37Rv</strain>
    </source>
</reference>
<name>RL28A_MYCTU</name>
<sequence length="94" mass="10530">MSARCQITGRTVGFGKAVSHSHRRTRRRWPPNIQLKAYYLPSEDRRIKVRVSAQGIKVIDRDGHRGRRRAARAGSAPAHFARQAGSSLRTAAIL</sequence>
<comment type="similarity">
    <text evidence="1">Belongs to the bacterial ribosomal protein bL28 family.</text>
</comment>
<protein>
    <recommendedName>
        <fullName evidence="1">Large ribosomal subunit protein bL28A</fullName>
    </recommendedName>
    <alternativeName>
        <fullName evidence="3">50S ribosomal protein L28 1</fullName>
    </alternativeName>
</protein>
<organism>
    <name type="scientific">Mycobacterium tuberculosis (strain ATCC 25618 / H37Rv)</name>
    <dbReference type="NCBI Taxonomy" id="83332"/>
    <lineage>
        <taxon>Bacteria</taxon>
        <taxon>Bacillati</taxon>
        <taxon>Actinomycetota</taxon>
        <taxon>Actinomycetes</taxon>
        <taxon>Mycobacteriales</taxon>
        <taxon>Mycobacteriaceae</taxon>
        <taxon>Mycobacterium</taxon>
        <taxon>Mycobacterium tuberculosis complex</taxon>
    </lineage>
</organism>
<keyword id="KW-1185">Reference proteome</keyword>
<keyword id="KW-0687">Ribonucleoprotein</keyword>
<keyword id="KW-0689">Ribosomal protein</keyword>
<accession>P9WHB1</accession>
<accession>L0T2L7</accession>
<accession>P0A5V6</accession>
<accession>Q10879</accession>
<gene>
    <name type="primary">rpmB1</name>
    <name type="synonym">rpmB</name>
    <name type="ordered locus">Rv0105c</name>
    <name type="ORF">MTCY251.24c</name>
</gene>
<proteinExistence type="inferred from homology"/>
<evidence type="ECO:0000255" key="1">
    <source>
        <dbReference type="HAMAP-Rule" id="MF_00373"/>
    </source>
</evidence>
<evidence type="ECO:0000256" key="2">
    <source>
        <dbReference type="SAM" id="MobiDB-lite"/>
    </source>
</evidence>
<evidence type="ECO:0000305" key="3"/>
<feature type="chain" id="PRO_0000178512" description="Large ribosomal subunit protein bL28A">
    <location>
        <begin position="1"/>
        <end position="94"/>
    </location>
</feature>
<feature type="region of interest" description="Disordered" evidence="2">
    <location>
        <begin position="63"/>
        <end position="94"/>
    </location>
</feature>
<feature type="compositionally biased region" description="Low complexity" evidence="2">
    <location>
        <begin position="72"/>
        <end position="82"/>
    </location>
</feature>
<feature type="compositionally biased region" description="Polar residues" evidence="2">
    <location>
        <begin position="84"/>
        <end position="94"/>
    </location>
</feature>